<sequence>MASTLKLFMLLPVILLLLQEAYGTIDVEARGDNFNCNKREGPCSQRSLCECDPNLQLGRHSDQLWHYNLRTNRCERGGYRDNCNSHTSSGACVMACER</sequence>
<dbReference type="EMBL" id="FJ042889">
    <property type="protein sequence ID" value="ACM86785.1"/>
    <property type="molecule type" value="mRNA"/>
</dbReference>
<dbReference type="EMBL" id="GEDV01010448">
    <property type="protein sequence ID" value="JAP78109.1"/>
    <property type="molecule type" value="Transcribed_RNA"/>
</dbReference>
<dbReference type="PDB" id="2W8X">
    <property type="method" value="X-ray"/>
    <property type="resolution" value="1.60 A"/>
    <property type="chains" value="A/B=34-98"/>
</dbReference>
<dbReference type="PDBsum" id="2W8X"/>
<dbReference type="SMR" id="C5H8E7"/>
<dbReference type="GO" id="GO:0005576">
    <property type="term" value="C:extracellular region"/>
    <property type="evidence" value="ECO:0007669"/>
    <property type="project" value="UniProtKB-SubCell"/>
</dbReference>
<dbReference type="GO" id="GO:0015459">
    <property type="term" value="F:potassium channel regulator activity"/>
    <property type="evidence" value="ECO:0007669"/>
    <property type="project" value="UniProtKB-KW"/>
</dbReference>
<dbReference type="GO" id="GO:0004867">
    <property type="term" value="F:serine-type endopeptidase inhibitor activity"/>
    <property type="evidence" value="ECO:0007669"/>
    <property type="project" value="InterPro"/>
</dbReference>
<dbReference type="GO" id="GO:0090729">
    <property type="term" value="F:toxin activity"/>
    <property type="evidence" value="ECO:0007669"/>
    <property type="project" value="UniProtKB-KW"/>
</dbReference>
<dbReference type="Gene3D" id="4.10.410.10">
    <property type="entry name" value="Pancreatic trypsin inhibitor Kunitz domain"/>
    <property type="match status" value="1"/>
</dbReference>
<dbReference type="InterPro" id="IPR036880">
    <property type="entry name" value="Kunitz_BPTI_sf"/>
</dbReference>
<dbReference type="SUPFAM" id="SSF57362">
    <property type="entry name" value="BPTI-like"/>
    <property type="match status" value="1"/>
</dbReference>
<organism>
    <name type="scientific">Rhipicephalus appendiculatus</name>
    <name type="common">Brown ear tick</name>
    <dbReference type="NCBI Taxonomy" id="34631"/>
    <lineage>
        <taxon>Eukaryota</taxon>
        <taxon>Metazoa</taxon>
        <taxon>Ecdysozoa</taxon>
        <taxon>Arthropoda</taxon>
        <taxon>Chelicerata</taxon>
        <taxon>Arachnida</taxon>
        <taxon>Acari</taxon>
        <taxon>Parasitiformes</taxon>
        <taxon>Ixodida</taxon>
        <taxon>Ixodoidea</taxon>
        <taxon>Ixodidae</taxon>
        <taxon>Rhipicephalinae</taxon>
        <taxon>Rhipicephalus</taxon>
        <taxon>Rhipicephalus</taxon>
    </lineage>
</organism>
<proteinExistence type="evidence at protein level"/>
<evidence type="ECO:0000255" key="1"/>
<evidence type="ECO:0000269" key="2">
    <source>
    </source>
</evidence>
<evidence type="ECO:0000303" key="3">
    <source>
    </source>
</evidence>
<evidence type="ECO:0000305" key="4">
    <source>
    </source>
</evidence>
<evidence type="ECO:0000312" key="5">
    <source>
        <dbReference type="EMBL" id="ACM86785.1"/>
    </source>
</evidence>
<evidence type="ECO:0000312" key="6">
    <source>
        <dbReference type="EMBL" id="JAP78109.1"/>
    </source>
</evidence>
<evidence type="ECO:0007744" key="7">
    <source>
        <dbReference type="PDB" id="2W8X"/>
    </source>
</evidence>
<reference key="1">
    <citation type="journal article" date="2009" name="J. Mol. Biol.">
        <title>An ion-channel modulator from the saliva of the brown ear tick has a highly modified Kunitz/BPTI structure.</title>
        <authorList>
            <person name="Paesen G.C."/>
            <person name="Siebold C."/>
            <person name="Dallas M.L."/>
            <person name="Peers C."/>
            <person name="Harlos K."/>
            <person name="Nuttall P.A."/>
            <person name="Nunn M.A."/>
            <person name="Stuart D.I."/>
            <person name="Esnouf R.M."/>
        </authorList>
    </citation>
    <scope>NUCLEOTIDE SEQUENCE [MRNA]</scope>
    <scope>RECOMBINANT EXPRESSION</scope>
    <scope>X-RAY CRYSTALLOGRAPHY (1.6 ANGSTROMS) OF 34-98</scope>
    <scope>DISULFIDE BONDS</scope>
    <scope>SUBUNIT</scope>
    <scope>DEVELOPMENTAL STAGE</scope>
    <source>
        <tissue>Salivary gland</tissue>
    </source>
</reference>
<reference key="2">
    <citation type="journal article" date="2016" name="Ticks Tick Borne Dis.">
        <title>De novo assembly and annotation of the salivary gland transcriptome of Rhipicephalus appendiculatus male and female ticks during blood feeding.</title>
        <authorList>
            <person name="de Castro M.H."/>
            <person name="de Klerk D."/>
            <person name="Pienaar R."/>
            <person name="Latif A.A."/>
            <person name="Rees D.J."/>
            <person name="Mans B.J."/>
        </authorList>
    </citation>
    <scope>NUCLEOTIDE SEQUENCE [MRNA]</scope>
    <source>
        <tissue>Salivary gland</tissue>
    </source>
</reference>
<keyword id="KW-0002">3D-structure</keyword>
<keyword id="KW-1221">Calcium-activated potassium channel impairing toxin</keyword>
<keyword id="KW-1015">Disulfide bond</keyword>
<keyword id="KW-0872">Ion channel impairing toxin</keyword>
<keyword id="KW-0632">Potassium channel impairing toxin</keyword>
<keyword id="KW-0964">Secreted</keyword>
<keyword id="KW-0732">Signal</keyword>
<keyword id="KW-0800">Toxin</keyword>
<name>TICK1_RHIAP</name>
<protein>
    <recommendedName>
        <fullName evidence="3">R.appendiculatus Kunitz/BPTI-like protein</fullName>
        <shortName evidence="3">Ra-KLP</shortName>
    </recommendedName>
    <alternativeName>
        <fullName evidence="5">Kunitz/BPTI-like protein</fullName>
    </alternativeName>
    <alternativeName>
        <fullName evidence="6">Pancreatic trypsin inhibitor</fullName>
    </alternativeName>
</protein>
<comment type="function">
    <text evidence="2">Activates large conductance calcium-activated potassium channels (maxiK, KCNMA1/KCNMB), when tested at micromolar concentrations, suggesting a potential mechanism for regulating host blood supply during feeding (PubMed:19394347). Shows no antiprotease activity, and does not prevent ADP-, PAF- or collagen-induced platelet aggregation (PubMed:19394347). Has no effect on blood coagulation and does not inhibit the alternative or classical complement cascades (PubMed:19394347).</text>
</comment>
<comment type="subunit">
    <text evidence="4">Monomer.</text>
</comment>
<comment type="subcellular location">
    <subcellularLocation>
        <location evidence="4">Secreted</location>
    </subcellularLocation>
</comment>
<comment type="tissue specificity">
    <text evidence="4">Expressed in salivary glands.</text>
</comment>
<comment type="developmental stage">
    <text evidence="2">Only detected in the salivary glands of adult female ticks between 2 to 4 days after attachment to the host animal. Is not obtained from nymphs, larvae or adult male ticks. Is only detected in a quarter of pairs of glands, suggesting non-continuous production of the protein or slow repletion of stocks following salivation.</text>
</comment>
<accession>C5H8E7</accession>
<feature type="signal peptide" evidence="1">
    <location>
        <begin position="1"/>
        <end position="23"/>
    </location>
</feature>
<feature type="chain" id="PRO_5008758406" description="R.appendiculatus Kunitz/BPTI-like protein">
    <location>
        <begin position="24"/>
        <end position="98"/>
    </location>
</feature>
<feature type="disulfide bond" evidence="2 7">
    <location>
        <begin position="36"/>
        <end position="51"/>
    </location>
</feature>
<feature type="disulfide bond" evidence="2 7">
    <location>
        <begin position="43"/>
        <end position="83"/>
    </location>
</feature>
<feature type="disulfide bond" evidence="2 7">
    <location>
        <begin position="49"/>
        <end position="96"/>
    </location>
</feature>
<feature type="disulfide bond" evidence="2 7">
    <location>
        <begin position="74"/>
        <end position="92"/>
    </location>
</feature>